<proteinExistence type="inferred from homology"/>
<accession>B7MKY5</accession>
<dbReference type="EMBL" id="CU928161">
    <property type="protein sequence ID" value="CAR02626.1"/>
    <property type="molecule type" value="Genomic_DNA"/>
</dbReference>
<dbReference type="RefSeq" id="WP_001362934.1">
    <property type="nucleotide sequence ID" value="NC_011742.1"/>
</dbReference>
<dbReference type="SMR" id="B7MKY5"/>
<dbReference type="KEGG" id="ecz:ECS88_1301"/>
<dbReference type="HOGENOM" id="CLU_099590_0_0_6"/>
<dbReference type="Proteomes" id="UP000000747">
    <property type="component" value="Chromosome"/>
</dbReference>
<dbReference type="Gene3D" id="3.10.450.50">
    <property type="match status" value="1"/>
</dbReference>
<dbReference type="HAMAP" id="MF_00612">
    <property type="entry name" value="UPF0225"/>
    <property type="match status" value="1"/>
</dbReference>
<dbReference type="InterPro" id="IPR032710">
    <property type="entry name" value="NTF2-like_dom_sf"/>
</dbReference>
<dbReference type="InterPro" id="IPR004027">
    <property type="entry name" value="SEC_C_motif"/>
</dbReference>
<dbReference type="InterPro" id="IPR023006">
    <property type="entry name" value="UPF0225"/>
</dbReference>
<dbReference type="InterPro" id="IPR048469">
    <property type="entry name" value="YchJ-like_M"/>
</dbReference>
<dbReference type="NCBIfam" id="NF002449">
    <property type="entry name" value="PRK01617.1"/>
    <property type="match status" value="1"/>
</dbReference>
<dbReference type="NCBIfam" id="NF002486">
    <property type="entry name" value="PRK01752.1"/>
    <property type="match status" value="1"/>
</dbReference>
<dbReference type="PANTHER" id="PTHR33747:SF1">
    <property type="entry name" value="ADENYLATE CYCLASE-ASSOCIATED CAP C-TERMINAL DOMAIN-CONTAINING PROTEIN"/>
    <property type="match status" value="1"/>
</dbReference>
<dbReference type="PANTHER" id="PTHR33747">
    <property type="entry name" value="UPF0225 PROTEIN SCO1677"/>
    <property type="match status" value="1"/>
</dbReference>
<dbReference type="Pfam" id="PF02810">
    <property type="entry name" value="SEC-C"/>
    <property type="match status" value="2"/>
</dbReference>
<dbReference type="Pfam" id="PF17775">
    <property type="entry name" value="YchJ_M-like"/>
    <property type="match status" value="1"/>
</dbReference>
<dbReference type="SUPFAM" id="SSF54427">
    <property type="entry name" value="NTF2-like"/>
    <property type="match status" value="1"/>
</dbReference>
<dbReference type="SUPFAM" id="SSF103642">
    <property type="entry name" value="Sec-C motif"/>
    <property type="match status" value="1"/>
</dbReference>
<keyword id="KW-1185">Reference proteome</keyword>
<evidence type="ECO:0000255" key="1">
    <source>
        <dbReference type="HAMAP-Rule" id="MF_00612"/>
    </source>
</evidence>
<comment type="similarity">
    <text evidence="1">Belongs to the UPF0225 family.</text>
</comment>
<gene>
    <name evidence="1" type="primary">ychJ</name>
    <name type="ordered locus">ECS88_1301</name>
</gene>
<organism>
    <name type="scientific">Escherichia coli O45:K1 (strain S88 / ExPEC)</name>
    <dbReference type="NCBI Taxonomy" id="585035"/>
    <lineage>
        <taxon>Bacteria</taxon>
        <taxon>Pseudomonadati</taxon>
        <taxon>Pseudomonadota</taxon>
        <taxon>Gammaproteobacteria</taxon>
        <taxon>Enterobacterales</taxon>
        <taxon>Enterobacteriaceae</taxon>
        <taxon>Escherichia</taxon>
    </lineage>
</organism>
<sequence length="152" mass="16900">MSQLCPCGSAVEYSLCCHPYVSGEKVAPDPEHLMRSRYCAFVMQDADYLIKTWHPSCGAAALRAELIAGFAHTEWLGLTVFEHCWQDGGNIGFVSFVARFTEGGKTGAIIERSRFLKENGQWYYIDGTRPQFGRNDPCPCGSGKKFKKCCGQ</sequence>
<protein>
    <recommendedName>
        <fullName evidence="1">UPF0225 protein YchJ</fullName>
    </recommendedName>
</protein>
<reference key="1">
    <citation type="journal article" date="2009" name="PLoS Genet.">
        <title>Organised genome dynamics in the Escherichia coli species results in highly diverse adaptive paths.</title>
        <authorList>
            <person name="Touchon M."/>
            <person name="Hoede C."/>
            <person name="Tenaillon O."/>
            <person name="Barbe V."/>
            <person name="Baeriswyl S."/>
            <person name="Bidet P."/>
            <person name="Bingen E."/>
            <person name="Bonacorsi S."/>
            <person name="Bouchier C."/>
            <person name="Bouvet O."/>
            <person name="Calteau A."/>
            <person name="Chiapello H."/>
            <person name="Clermont O."/>
            <person name="Cruveiller S."/>
            <person name="Danchin A."/>
            <person name="Diard M."/>
            <person name="Dossat C."/>
            <person name="Karoui M.E."/>
            <person name="Frapy E."/>
            <person name="Garry L."/>
            <person name="Ghigo J.M."/>
            <person name="Gilles A.M."/>
            <person name="Johnson J."/>
            <person name="Le Bouguenec C."/>
            <person name="Lescat M."/>
            <person name="Mangenot S."/>
            <person name="Martinez-Jehanne V."/>
            <person name="Matic I."/>
            <person name="Nassif X."/>
            <person name="Oztas S."/>
            <person name="Petit M.A."/>
            <person name="Pichon C."/>
            <person name="Rouy Z."/>
            <person name="Ruf C.S."/>
            <person name="Schneider D."/>
            <person name="Tourret J."/>
            <person name="Vacherie B."/>
            <person name="Vallenet D."/>
            <person name="Medigue C."/>
            <person name="Rocha E.P.C."/>
            <person name="Denamur E."/>
        </authorList>
    </citation>
    <scope>NUCLEOTIDE SEQUENCE [LARGE SCALE GENOMIC DNA]</scope>
    <source>
        <strain>S88 / ExPEC</strain>
    </source>
</reference>
<feature type="chain" id="PRO_1000130379" description="UPF0225 protein YchJ">
    <location>
        <begin position="1"/>
        <end position="152"/>
    </location>
</feature>
<name>YCHJ_ECO45</name>